<accession>P06218</accession>
<proteinExistence type="inferred from homology"/>
<comment type="function">
    <text evidence="2">Member of the two-component regulatory system NtrB/NtrC, which controls expression of the nitrogen-regulated (ntr) genes in response to nitrogen limitation. Under conditions of nitrogen limitation, NtrB autophosphorylates and transfers the phosphoryl group to NtrC. In the presence of nitrogen, acts as a phosphatase that dephosphorylates and inactivates NtrC.</text>
</comment>
<comment type="catalytic activity">
    <reaction evidence="2">
        <text>ATP + protein L-histidine = ADP + protein N-phospho-L-histidine.</text>
        <dbReference type="EC" id="2.7.13.3"/>
    </reaction>
</comment>
<comment type="subcellular location">
    <subcellularLocation>
        <location evidence="2">Cytoplasm</location>
    </subcellularLocation>
</comment>
<comment type="PTM">
    <text evidence="2">Autophosphorylated.</text>
</comment>
<name>NTRB_KLEOX</name>
<evidence type="ECO:0000250" key="1"/>
<evidence type="ECO:0000250" key="2">
    <source>
        <dbReference type="UniProtKB" id="P0AFB5"/>
    </source>
</evidence>
<evidence type="ECO:0000255" key="3">
    <source>
        <dbReference type="PROSITE-ProRule" id="PRU00107"/>
    </source>
</evidence>
<protein>
    <recommendedName>
        <fullName evidence="2">Sensory histidine kinase/phosphatase NtrB</fullName>
        <ecNumber evidence="2">2.7.13.3</ecNumber>
        <ecNumber evidence="2">3.1.3.-</ecNumber>
    </recommendedName>
    <alternativeName>
        <fullName evidence="2">Nitrogen regulation protein NR(II)</fullName>
    </alternativeName>
    <alternativeName>
        <fullName evidence="2">Nitrogen regulator II</fullName>
        <shortName evidence="2">NRII</shortName>
    </alternativeName>
</protein>
<gene>
    <name type="primary">ntrB</name>
</gene>
<dbReference type="EC" id="2.7.13.3" evidence="2"/>
<dbReference type="EC" id="3.1.3.-" evidence="2"/>
<dbReference type="EMBL" id="X03146">
    <property type="protein sequence ID" value="CAA26923.1"/>
    <property type="molecule type" value="Genomic_DNA"/>
</dbReference>
<dbReference type="PIR" id="A24114">
    <property type="entry name" value="A24114"/>
</dbReference>
<dbReference type="SMR" id="P06218"/>
<dbReference type="STRING" id="571.AB185_06940"/>
<dbReference type="eggNOG" id="COG3852">
    <property type="taxonomic scope" value="Bacteria"/>
</dbReference>
<dbReference type="GO" id="GO:0005737">
    <property type="term" value="C:cytoplasm"/>
    <property type="evidence" value="ECO:0007669"/>
    <property type="project" value="UniProtKB-SubCell"/>
</dbReference>
<dbReference type="GO" id="GO:0005524">
    <property type="term" value="F:ATP binding"/>
    <property type="evidence" value="ECO:0007669"/>
    <property type="project" value="UniProtKB-KW"/>
</dbReference>
<dbReference type="GO" id="GO:0016787">
    <property type="term" value="F:hydrolase activity"/>
    <property type="evidence" value="ECO:0007669"/>
    <property type="project" value="UniProtKB-KW"/>
</dbReference>
<dbReference type="GO" id="GO:0000155">
    <property type="term" value="F:phosphorelay sensor kinase activity"/>
    <property type="evidence" value="ECO:0007669"/>
    <property type="project" value="InterPro"/>
</dbReference>
<dbReference type="GO" id="GO:0009399">
    <property type="term" value="P:nitrogen fixation"/>
    <property type="evidence" value="ECO:0007669"/>
    <property type="project" value="UniProtKB-KW"/>
</dbReference>
<dbReference type="GO" id="GO:0006355">
    <property type="term" value="P:regulation of DNA-templated transcription"/>
    <property type="evidence" value="ECO:0007669"/>
    <property type="project" value="InterPro"/>
</dbReference>
<dbReference type="CDD" id="cd16918">
    <property type="entry name" value="HATPase_Glnl-NtrB-like"/>
    <property type="match status" value="1"/>
</dbReference>
<dbReference type="CDD" id="cd00082">
    <property type="entry name" value="HisKA"/>
    <property type="match status" value="1"/>
</dbReference>
<dbReference type="CDD" id="cd00130">
    <property type="entry name" value="PAS"/>
    <property type="match status" value="1"/>
</dbReference>
<dbReference type="FunFam" id="1.10.287.130:FF:000005">
    <property type="entry name" value="Nitrogen regulation histidine kinase"/>
    <property type="match status" value="1"/>
</dbReference>
<dbReference type="FunFam" id="3.30.565.10:FF:000008">
    <property type="entry name" value="Nitrogen regulation histidine kinase"/>
    <property type="match status" value="1"/>
</dbReference>
<dbReference type="Gene3D" id="1.10.287.130">
    <property type="match status" value="1"/>
</dbReference>
<dbReference type="Gene3D" id="3.30.565.10">
    <property type="entry name" value="Histidine kinase-like ATPase, C-terminal domain"/>
    <property type="match status" value="1"/>
</dbReference>
<dbReference type="Gene3D" id="3.30.450.20">
    <property type="entry name" value="PAS domain"/>
    <property type="match status" value="1"/>
</dbReference>
<dbReference type="InterPro" id="IPR036890">
    <property type="entry name" value="HATPase_C_sf"/>
</dbReference>
<dbReference type="InterPro" id="IPR005467">
    <property type="entry name" value="His_kinase_dom"/>
</dbReference>
<dbReference type="InterPro" id="IPR003661">
    <property type="entry name" value="HisK_dim/P_dom"/>
</dbReference>
<dbReference type="InterPro" id="IPR036097">
    <property type="entry name" value="HisK_dim/P_sf"/>
</dbReference>
<dbReference type="InterPro" id="IPR000014">
    <property type="entry name" value="PAS"/>
</dbReference>
<dbReference type="InterPro" id="IPR035965">
    <property type="entry name" value="PAS-like_dom_sf"/>
</dbReference>
<dbReference type="InterPro" id="IPR013767">
    <property type="entry name" value="PAS_fold"/>
</dbReference>
<dbReference type="InterPro" id="IPR004358">
    <property type="entry name" value="Sig_transdc_His_kin-like_C"/>
</dbReference>
<dbReference type="NCBIfam" id="NF008293">
    <property type="entry name" value="PRK11073.1"/>
    <property type="match status" value="1"/>
</dbReference>
<dbReference type="PANTHER" id="PTHR43065">
    <property type="entry name" value="SENSOR HISTIDINE KINASE"/>
    <property type="match status" value="1"/>
</dbReference>
<dbReference type="PANTHER" id="PTHR43065:SF16">
    <property type="entry name" value="SENSORY HISTIDINE KINASE_PHOSPHATASE NTRB"/>
    <property type="match status" value="1"/>
</dbReference>
<dbReference type="Pfam" id="PF02518">
    <property type="entry name" value="HATPase_c"/>
    <property type="match status" value="1"/>
</dbReference>
<dbReference type="Pfam" id="PF00512">
    <property type="entry name" value="HisKA"/>
    <property type="match status" value="1"/>
</dbReference>
<dbReference type="Pfam" id="PF00989">
    <property type="entry name" value="PAS"/>
    <property type="match status" value="1"/>
</dbReference>
<dbReference type="PRINTS" id="PR00344">
    <property type="entry name" value="BCTRLSENSOR"/>
</dbReference>
<dbReference type="SMART" id="SM00387">
    <property type="entry name" value="HATPase_c"/>
    <property type="match status" value="1"/>
</dbReference>
<dbReference type="SMART" id="SM00388">
    <property type="entry name" value="HisKA"/>
    <property type="match status" value="1"/>
</dbReference>
<dbReference type="SMART" id="SM00091">
    <property type="entry name" value="PAS"/>
    <property type="match status" value="1"/>
</dbReference>
<dbReference type="SUPFAM" id="SSF55874">
    <property type="entry name" value="ATPase domain of HSP90 chaperone/DNA topoisomerase II/histidine kinase"/>
    <property type="match status" value="1"/>
</dbReference>
<dbReference type="SUPFAM" id="SSF47384">
    <property type="entry name" value="Homodimeric domain of signal transducing histidine kinase"/>
    <property type="match status" value="1"/>
</dbReference>
<dbReference type="SUPFAM" id="SSF55785">
    <property type="entry name" value="PYP-like sensor domain (PAS domain)"/>
    <property type="match status" value="1"/>
</dbReference>
<dbReference type="PROSITE" id="PS50109">
    <property type="entry name" value="HIS_KIN"/>
    <property type="match status" value="1"/>
</dbReference>
<sequence>MATGTLPDAGQILNSLINSILLVDDDLAVHYANPAAQQLLAQSSRKLFGTPLPELLSYFSLNIGLMQESLAAGQGFTDNEVTLVIDGRSHILSLTAQRLPEGYILLEMAPMDNQRRLSQEQLQHAQQIAARDLVRGLAHEIKNPLGGLRGAAQLLSKALPDPALMEYTKVIIEQADRLRNLVDRLLGPQHPGMHVTESIHKVAERVVKLVSMELPDNVKLVRDYDPSLPELPHDPDQIEQVLLNIVRNALQALGPEGGEITLRTRTAFQLTLHGVRYRLAARIDVEDNGPGIPSHLQDTLFYPMVSGREGGTGLGLSIARSLIDQHSGKIEFTSWPGHTEFSVYLPIRK</sequence>
<keyword id="KW-0067">ATP-binding</keyword>
<keyword id="KW-0963">Cytoplasm</keyword>
<keyword id="KW-0378">Hydrolase</keyword>
<keyword id="KW-0418">Kinase</keyword>
<keyword id="KW-0535">Nitrogen fixation</keyword>
<keyword id="KW-0547">Nucleotide-binding</keyword>
<keyword id="KW-0597">Phosphoprotein</keyword>
<keyword id="KW-0808">Transferase</keyword>
<keyword id="KW-0902">Two-component regulatory system</keyword>
<reference key="1">
    <citation type="journal article" date="1985" name="Nucleic Acids Res.">
        <title>The nucleotide sequence of the nitrogen regulation gene ntrB and the glnA-ntrBC intergenic region of Klebsiella pneumoniae.</title>
        <authorList>
            <person name="McFarlane S.A."/>
            <person name="Merrick M.J."/>
        </authorList>
    </citation>
    <scope>NUCLEOTIDE SEQUENCE [GENOMIC DNA]</scope>
</reference>
<feature type="chain" id="PRO_0000074825" description="Sensory histidine kinase/phosphatase NtrB">
    <location>
        <begin position="1"/>
        <end position="349"/>
    </location>
</feature>
<feature type="domain" description="PAS">
    <location>
        <begin position="5"/>
        <end position="78"/>
    </location>
</feature>
<feature type="domain" description="Histidine kinase" evidence="3">
    <location>
        <begin position="136"/>
        <end position="349"/>
    </location>
</feature>
<feature type="binding site" evidence="1">
    <location>
        <position position="329"/>
    </location>
    <ligand>
        <name>ATP</name>
        <dbReference type="ChEBI" id="CHEBI:30616"/>
    </ligand>
</feature>
<feature type="modified residue" description="Phosphohistidine; by autocatalysis" evidence="3">
    <location>
        <position position="139"/>
    </location>
</feature>
<organism>
    <name type="scientific">Klebsiella oxytoca</name>
    <dbReference type="NCBI Taxonomy" id="571"/>
    <lineage>
        <taxon>Bacteria</taxon>
        <taxon>Pseudomonadati</taxon>
        <taxon>Pseudomonadota</taxon>
        <taxon>Gammaproteobacteria</taxon>
        <taxon>Enterobacterales</taxon>
        <taxon>Enterobacteriaceae</taxon>
        <taxon>Klebsiella/Raoultella group</taxon>
        <taxon>Klebsiella</taxon>
    </lineage>
</organism>